<dbReference type="EMBL" id="AM398681">
    <property type="protein sequence ID" value="CAL43265.1"/>
    <property type="molecule type" value="Genomic_DNA"/>
</dbReference>
<dbReference type="RefSeq" id="WP_011963314.1">
    <property type="nucleotide sequence ID" value="NC_009613.3"/>
</dbReference>
<dbReference type="RefSeq" id="YP_001296076.1">
    <property type="nucleotide sequence ID" value="NC_009613.3"/>
</dbReference>
<dbReference type="SMR" id="A6GYU2"/>
<dbReference type="STRING" id="402612.FP1178"/>
<dbReference type="EnsemblBacteria" id="CAL43265">
    <property type="protein sequence ID" value="CAL43265"/>
    <property type="gene ID" value="FP1178"/>
</dbReference>
<dbReference type="GeneID" id="66553082"/>
<dbReference type="KEGG" id="fps:FP1178"/>
<dbReference type="PATRIC" id="fig|402612.5.peg.1195"/>
<dbReference type="eggNOG" id="COG0244">
    <property type="taxonomic scope" value="Bacteria"/>
</dbReference>
<dbReference type="HOGENOM" id="CLU_092227_3_0_10"/>
<dbReference type="OrthoDB" id="1523686at2"/>
<dbReference type="Proteomes" id="UP000006394">
    <property type="component" value="Chromosome"/>
</dbReference>
<dbReference type="GO" id="GO:1990904">
    <property type="term" value="C:ribonucleoprotein complex"/>
    <property type="evidence" value="ECO:0007669"/>
    <property type="project" value="UniProtKB-KW"/>
</dbReference>
<dbReference type="GO" id="GO:0005840">
    <property type="term" value="C:ribosome"/>
    <property type="evidence" value="ECO:0007669"/>
    <property type="project" value="UniProtKB-KW"/>
</dbReference>
<dbReference type="GO" id="GO:0070180">
    <property type="term" value="F:large ribosomal subunit rRNA binding"/>
    <property type="evidence" value="ECO:0007669"/>
    <property type="project" value="UniProtKB-UniRule"/>
</dbReference>
<dbReference type="GO" id="GO:0006412">
    <property type="term" value="P:translation"/>
    <property type="evidence" value="ECO:0007669"/>
    <property type="project" value="UniProtKB-UniRule"/>
</dbReference>
<dbReference type="CDD" id="cd05797">
    <property type="entry name" value="Ribosomal_L10"/>
    <property type="match status" value="1"/>
</dbReference>
<dbReference type="Gene3D" id="3.30.70.1730">
    <property type="match status" value="1"/>
</dbReference>
<dbReference type="HAMAP" id="MF_00362">
    <property type="entry name" value="Ribosomal_uL10"/>
    <property type="match status" value="1"/>
</dbReference>
<dbReference type="InterPro" id="IPR001790">
    <property type="entry name" value="Ribosomal_uL10"/>
</dbReference>
<dbReference type="InterPro" id="IPR043141">
    <property type="entry name" value="Ribosomal_uL10-like_sf"/>
</dbReference>
<dbReference type="InterPro" id="IPR022973">
    <property type="entry name" value="Ribosomal_uL10_bac"/>
</dbReference>
<dbReference type="InterPro" id="IPR047865">
    <property type="entry name" value="Ribosomal_uL10_bac_type"/>
</dbReference>
<dbReference type="NCBIfam" id="NF000955">
    <property type="entry name" value="PRK00099.1-1"/>
    <property type="match status" value="1"/>
</dbReference>
<dbReference type="PANTHER" id="PTHR11560">
    <property type="entry name" value="39S RIBOSOMAL PROTEIN L10, MITOCHONDRIAL"/>
    <property type="match status" value="1"/>
</dbReference>
<dbReference type="Pfam" id="PF00466">
    <property type="entry name" value="Ribosomal_L10"/>
    <property type="match status" value="1"/>
</dbReference>
<dbReference type="SUPFAM" id="SSF160369">
    <property type="entry name" value="Ribosomal protein L10-like"/>
    <property type="match status" value="1"/>
</dbReference>
<evidence type="ECO:0000255" key="1">
    <source>
        <dbReference type="HAMAP-Rule" id="MF_00362"/>
    </source>
</evidence>
<evidence type="ECO:0000305" key="2"/>
<feature type="chain" id="PRO_1000120965" description="Large ribosomal subunit protein uL10">
    <location>
        <begin position="1"/>
        <end position="166"/>
    </location>
</feature>
<organism>
    <name type="scientific">Flavobacterium psychrophilum (strain ATCC 49511 / DSM 21280 / CIP 103535 / JIP02/86)</name>
    <dbReference type="NCBI Taxonomy" id="402612"/>
    <lineage>
        <taxon>Bacteria</taxon>
        <taxon>Pseudomonadati</taxon>
        <taxon>Bacteroidota</taxon>
        <taxon>Flavobacteriia</taxon>
        <taxon>Flavobacteriales</taxon>
        <taxon>Flavobacteriaceae</taxon>
        <taxon>Flavobacterium</taxon>
    </lineage>
</organism>
<sequence length="166" mass="17950">MTREEKSIAIGDLTEKLAGTNILYVADISGLNAETTSNLRRACFKAGIKLEVVKNTLLVKAMEASDKDFGDLPLTLKGNTSIFFADVANGPAKIIKDFRKKSDKPLLKGAFINDEIYIGDNLLDSLVNLKSRDEVIGEIIGLLQSPAKRVIAALLNNAESKGEVAE</sequence>
<name>RL10_FLAPJ</name>
<accession>A6GYU2</accession>
<keyword id="KW-1185">Reference proteome</keyword>
<keyword id="KW-0687">Ribonucleoprotein</keyword>
<keyword id="KW-0689">Ribosomal protein</keyword>
<keyword id="KW-0694">RNA-binding</keyword>
<keyword id="KW-0699">rRNA-binding</keyword>
<comment type="function">
    <text evidence="1">Forms part of the ribosomal stalk, playing a central role in the interaction of the ribosome with GTP-bound translation factors.</text>
</comment>
<comment type="subunit">
    <text evidence="1">Part of the ribosomal stalk of the 50S ribosomal subunit. The N-terminus interacts with L11 and the large rRNA to form the base of the stalk. The C-terminus forms an elongated spine to which L12 dimers bind in a sequential fashion forming a multimeric L10(L12)X complex.</text>
</comment>
<comment type="similarity">
    <text evidence="1">Belongs to the universal ribosomal protein uL10 family.</text>
</comment>
<reference key="1">
    <citation type="journal article" date="2007" name="Nat. Biotechnol.">
        <title>Complete genome sequence of the fish pathogen Flavobacterium psychrophilum.</title>
        <authorList>
            <person name="Duchaud E."/>
            <person name="Boussaha M."/>
            <person name="Loux V."/>
            <person name="Bernardet J.-F."/>
            <person name="Michel C."/>
            <person name="Kerouault B."/>
            <person name="Mondot S."/>
            <person name="Nicolas P."/>
            <person name="Bossy R."/>
            <person name="Caron C."/>
            <person name="Bessieres P."/>
            <person name="Gibrat J.-F."/>
            <person name="Claverol S."/>
            <person name="Dumetz F."/>
            <person name="Le Henaff M."/>
            <person name="Benmansour A."/>
        </authorList>
    </citation>
    <scope>NUCLEOTIDE SEQUENCE [LARGE SCALE GENOMIC DNA]</scope>
    <source>
        <strain>ATCC 49511 / DSM 21280 / CIP 103535 / JIP02/86</strain>
    </source>
</reference>
<gene>
    <name evidence="1" type="primary">rplJ</name>
    <name type="ordered locus">FP1178</name>
</gene>
<proteinExistence type="inferred from homology"/>
<protein>
    <recommendedName>
        <fullName evidence="1">Large ribosomal subunit protein uL10</fullName>
    </recommendedName>
    <alternativeName>
        <fullName evidence="2">50S ribosomal protein L10</fullName>
    </alternativeName>
</protein>